<keyword id="KW-0966">Cell projection</keyword>
<keyword id="KW-0970">Cilium biogenesis/degradation</keyword>
<keyword id="KW-0963">Cytoplasm</keyword>
<keyword id="KW-0206">Cytoskeleton</keyword>
<keyword id="KW-0597">Phosphoprotein</keyword>
<keyword id="KW-1185">Reference proteome</keyword>
<protein>
    <recommendedName>
        <fullName evidence="5">Centrosomal protein 43</fullName>
    </recommendedName>
    <alternativeName>
        <fullName>FGFR1 oncogene partner</fullName>
    </alternativeName>
</protein>
<sequence length="399" mass="42764">MAATAAAVVAEEDTELRYLLVQTLENSGVLNRIKAELRAAVFLALEEQEKVENKTPLVNESLKKFLNTKDGRLVASLVAEFLQFFNLDFTLAVFQPETSTFQGLEGRENLARDLGIIEAEGTVGGPLLLEVIRRCQQKEKALTSGEGALDLSDVHSPPKSPEGKTGAHTPPSKIPRYKGQGNKKTSGQQPGAKKASNDASHSDTSISSSEPKSRSGLHLLAHETKIGSLLSNNSLDVNAKAGPGPEEDDLEGDSFFDDPIPKPEAAYGWRSEPSKQAGSLASLSDAPPLKSGLSSLAGAPSLKESESKRGNTVLKDLKLVNDKIGSLGLGTGEEDDYVDDFNSTSHRSEKSELSIGEEIEEDLSVEMDDVNTSDKLDDLTQDLTVSQLSDVADYLEDVA</sequence>
<organism>
    <name type="scientific">Bos taurus</name>
    <name type="common">Bovine</name>
    <dbReference type="NCBI Taxonomy" id="9913"/>
    <lineage>
        <taxon>Eukaryota</taxon>
        <taxon>Metazoa</taxon>
        <taxon>Chordata</taxon>
        <taxon>Craniata</taxon>
        <taxon>Vertebrata</taxon>
        <taxon>Euteleostomi</taxon>
        <taxon>Mammalia</taxon>
        <taxon>Eutheria</taxon>
        <taxon>Laurasiatheria</taxon>
        <taxon>Artiodactyla</taxon>
        <taxon>Ruminantia</taxon>
        <taxon>Pecora</taxon>
        <taxon>Bovidae</taxon>
        <taxon>Bovinae</taxon>
        <taxon>Bos</taxon>
    </lineage>
</organism>
<feature type="chain" id="PRO_0000233292" description="Centrosomal protein 43">
    <location>
        <begin position="1"/>
        <end position="399"/>
    </location>
</feature>
<feature type="domain" description="LisH" evidence="3">
    <location>
        <begin position="70"/>
        <end position="102"/>
    </location>
</feature>
<feature type="region of interest" description="Disordered" evidence="4">
    <location>
        <begin position="143"/>
        <end position="311"/>
    </location>
</feature>
<feature type="region of interest" description="Disordered" evidence="4">
    <location>
        <begin position="328"/>
        <end position="357"/>
    </location>
</feature>
<feature type="compositionally biased region" description="Low complexity" evidence="4">
    <location>
        <begin position="197"/>
        <end position="209"/>
    </location>
</feature>
<feature type="compositionally biased region" description="Acidic residues" evidence="4">
    <location>
        <begin position="245"/>
        <end position="256"/>
    </location>
</feature>
<feature type="compositionally biased region" description="Low complexity" evidence="4">
    <location>
        <begin position="286"/>
        <end position="302"/>
    </location>
</feature>
<feature type="modified residue" description="Phosphothreonine" evidence="1">
    <location>
        <position position="143"/>
    </location>
</feature>
<feature type="modified residue" description="Phosphoserine" evidence="1">
    <location>
        <position position="152"/>
    </location>
</feature>
<feature type="modified residue" description="Phosphoserine" evidence="1">
    <location>
        <position position="156"/>
    </location>
</feature>
<feature type="modified residue" description="Phosphoserine" evidence="1">
    <location>
        <position position="160"/>
    </location>
</feature>
<feature type="modified residue" description="Phosphoserine" evidence="1">
    <location>
        <position position="202"/>
    </location>
</feature>
<feature type="modified residue" description="Phosphoserine" evidence="1">
    <location>
        <position position="301"/>
    </location>
</feature>
<feature type="modified residue" description="Phosphoserine" evidence="1">
    <location>
        <position position="326"/>
    </location>
</feature>
<feature type="modified residue" description="Phosphotyrosine" evidence="2">
    <location>
        <position position="337"/>
    </location>
</feature>
<evidence type="ECO:0000250" key="1">
    <source>
        <dbReference type="UniProtKB" id="O95684"/>
    </source>
</evidence>
<evidence type="ECO:0000250" key="2">
    <source>
        <dbReference type="UniProtKB" id="Q66JX5"/>
    </source>
</evidence>
<evidence type="ECO:0000255" key="3">
    <source>
        <dbReference type="PROSITE-ProRule" id="PRU00126"/>
    </source>
</evidence>
<evidence type="ECO:0000256" key="4">
    <source>
        <dbReference type="SAM" id="MobiDB-lite"/>
    </source>
</evidence>
<evidence type="ECO:0000305" key="5"/>
<name>CEP43_BOVIN</name>
<accession>Q2YDD1</accession>
<reference key="1">
    <citation type="submission" date="2005-11" db="EMBL/GenBank/DDBJ databases">
        <authorList>
            <consortium name="NIH - Mammalian Gene Collection (MGC) project"/>
        </authorList>
    </citation>
    <scope>NUCLEOTIDE SEQUENCE [LARGE SCALE MRNA]</scope>
    <source>
        <strain>Crossbred X Angus</strain>
        <tissue>Liver</tissue>
    </source>
</reference>
<gene>
    <name type="primary">CEP43</name>
    <name type="synonym">FGFR1OP</name>
</gene>
<proteinExistence type="evidence at transcript level"/>
<dbReference type="EMBL" id="BC110279">
    <property type="protein sequence ID" value="AAI10280.1"/>
    <property type="molecule type" value="mRNA"/>
</dbReference>
<dbReference type="RefSeq" id="NP_001071327.1">
    <property type="nucleotide sequence ID" value="NM_001077859.2"/>
</dbReference>
<dbReference type="SMR" id="Q2YDD1"/>
<dbReference type="FunCoup" id="Q2YDD1">
    <property type="interactions" value="1400"/>
</dbReference>
<dbReference type="STRING" id="9913.ENSBTAP00000019271"/>
<dbReference type="PaxDb" id="9913-ENSBTAP00000019271"/>
<dbReference type="GeneID" id="506246"/>
<dbReference type="KEGG" id="bta:506246"/>
<dbReference type="CTD" id="11116"/>
<dbReference type="eggNOG" id="ENOG502QR70">
    <property type="taxonomic scope" value="Eukaryota"/>
</dbReference>
<dbReference type="InParanoid" id="Q2YDD1"/>
<dbReference type="OrthoDB" id="2160638at2759"/>
<dbReference type="Proteomes" id="UP000009136">
    <property type="component" value="Unplaced"/>
</dbReference>
<dbReference type="GO" id="GO:0042995">
    <property type="term" value="C:cell projection"/>
    <property type="evidence" value="ECO:0007669"/>
    <property type="project" value="UniProtKB-KW"/>
</dbReference>
<dbReference type="GO" id="GO:0005814">
    <property type="term" value="C:centriole"/>
    <property type="evidence" value="ECO:0007669"/>
    <property type="project" value="UniProtKB-SubCell"/>
</dbReference>
<dbReference type="GO" id="GO:0005813">
    <property type="term" value="C:centrosome"/>
    <property type="evidence" value="ECO:0000318"/>
    <property type="project" value="GO_Central"/>
</dbReference>
<dbReference type="GO" id="GO:0005737">
    <property type="term" value="C:cytoplasm"/>
    <property type="evidence" value="ECO:0007669"/>
    <property type="project" value="UniProtKB-KW"/>
</dbReference>
<dbReference type="GO" id="GO:0030030">
    <property type="term" value="P:cell projection organization"/>
    <property type="evidence" value="ECO:0007669"/>
    <property type="project" value="UniProtKB-KW"/>
</dbReference>
<dbReference type="GO" id="GO:0034453">
    <property type="term" value="P:microtubule anchoring"/>
    <property type="evidence" value="ECO:0007669"/>
    <property type="project" value="InterPro"/>
</dbReference>
<dbReference type="FunFam" id="1.20.960.40:FF:000001">
    <property type="entry name" value="FGFR1 oncogene partner"/>
    <property type="match status" value="1"/>
</dbReference>
<dbReference type="Gene3D" id="1.20.960.40">
    <property type="match status" value="1"/>
</dbReference>
<dbReference type="InterPro" id="IPR018993">
    <property type="entry name" value="FOP_dimerisation-dom_N"/>
</dbReference>
<dbReference type="InterPro" id="IPR006594">
    <property type="entry name" value="LisH"/>
</dbReference>
<dbReference type="PANTHER" id="PTHR15431:SF9">
    <property type="entry name" value="CENTROSOMAL PROTEIN 43"/>
    <property type="match status" value="1"/>
</dbReference>
<dbReference type="PANTHER" id="PTHR15431">
    <property type="entry name" value="FGFR1 ONCOGENE PARTNER/LISH DOMAIN-CONTAINING PROTEIN"/>
    <property type="match status" value="1"/>
</dbReference>
<dbReference type="Pfam" id="PF09398">
    <property type="entry name" value="FOP_dimer"/>
    <property type="match status" value="1"/>
</dbReference>
<dbReference type="PROSITE" id="PS50896">
    <property type="entry name" value="LISH"/>
    <property type="match status" value="1"/>
</dbReference>
<comment type="function">
    <text evidence="1">Required for anchoring microtubules to the centrosomes. Required for ciliation.</text>
</comment>
<comment type="subunit">
    <text evidence="1">Homodimer. Part of a ternary complex that contains CEP350, CEP43 and MAPRE1. Interacts directly with CEP350 and MAPRE1. Interacts with CEP19. Interacts (via N-terminus) with CEP350 (via C-terminus).</text>
</comment>
<comment type="subcellular location">
    <subcellularLocation>
        <location evidence="1">Cytoplasm</location>
        <location evidence="1">Cytoskeleton</location>
        <location evidence="1">Microtubule organizing center</location>
        <location evidence="1">Centrosome</location>
    </subcellularLocation>
    <subcellularLocation>
        <location evidence="1">Cytoplasm</location>
        <location evidence="1">Cytoskeleton</location>
        <location evidence="1">Microtubule organizing center</location>
        <location evidence="1">Centrosome</location>
        <location evidence="1">Centriole</location>
    </subcellularLocation>
    <subcellularLocation>
        <location evidence="1">Cytoplasm</location>
        <location evidence="1">Cytoskeleton</location>
        <location evidence="1">Cilium basal body</location>
    </subcellularLocation>
    <text evidence="1">Associated with gamma-tubulin. Localizes on both mother and daughter centrioles. Localizes to an axial position on the mother centriole. Localizes to the distal end of the centriole partly to the subdistal appendage region.</text>
</comment>
<comment type="similarity">
    <text evidence="5">Belongs to the CEP43 family.</text>
</comment>